<comment type="function">
    <text evidence="1">Catalyzes the initial step of the lipid cycle reactions in the biosynthesis of the cell wall peptidoglycan: transfers peptidoglycan precursor phospho-MurNAc-pentapeptide from UDP-MurNAc-pentapeptide onto the lipid carrier undecaprenyl phosphate, yielding undecaprenyl-pyrophosphoryl-MurNAc-pentapeptide, known as lipid I.</text>
</comment>
<comment type="catalytic activity">
    <reaction evidence="1">
        <text>UDP-N-acetyl-alpha-D-muramoyl-L-alanyl-gamma-D-glutamyl-meso-2,6-diaminopimeloyl-D-alanyl-D-alanine + di-trans,octa-cis-undecaprenyl phosphate = di-trans,octa-cis-undecaprenyl diphospho-N-acetyl-alpha-D-muramoyl-L-alanyl-D-glutamyl-meso-2,6-diaminopimeloyl-D-alanyl-D-alanine + UMP</text>
        <dbReference type="Rhea" id="RHEA:28386"/>
        <dbReference type="ChEBI" id="CHEBI:57865"/>
        <dbReference type="ChEBI" id="CHEBI:60392"/>
        <dbReference type="ChEBI" id="CHEBI:61386"/>
        <dbReference type="ChEBI" id="CHEBI:61387"/>
        <dbReference type="EC" id="2.7.8.13"/>
    </reaction>
</comment>
<comment type="cofactor">
    <cofactor evidence="1">
        <name>Mg(2+)</name>
        <dbReference type="ChEBI" id="CHEBI:18420"/>
    </cofactor>
</comment>
<comment type="pathway">
    <text evidence="1">Cell wall biogenesis; peptidoglycan biosynthesis.</text>
</comment>
<comment type="subcellular location">
    <subcellularLocation>
        <location evidence="1">Cell inner membrane</location>
        <topology evidence="1">Multi-pass membrane protein</topology>
    </subcellularLocation>
</comment>
<comment type="similarity">
    <text evidence="1">Belongs to the glycosyltransferase 4 family. MraY subfamily.</text>
</comment>
<accession>Q11GS2</accession>
<sequence length="360" mass="38398">MLMLLVALADEFSVLNVFRYITFRTGGALITAAFIVFLFGPAIISSLRLRQGKGQPIRADGPQTHFKKAGTPTMGGLMIFSGILGSSILWGNLSSVYVWVVLMVMVGFGAIGFYDDYLKVTKQSHLGFSGKSRLALEFVIAGFAAWIIMSAGQEPFSSSLTFPFFKELLLNLGIFFIPFAAFVIVGAGNAVNLTDGLDGLATVPVMVAAASFGVIAYLSGNAIFADYLQIHFVPGTGELSVILGAVIGAGLGFLWFNAPPAAIFMGDTGSLALGGLIGTVAVATKHEIVLAIIGGLFVIEILSVIIQVAVFKMTGKRVFLMAPIHHHFEKLGWTESQVVIRFWIIAVVLALIGLSTLKLR</sequence>
<organism>
    <name type="scientific">Chelativorans sp. (strain BNC1)</name>
    <dbReference type="NCBI Taxonomy" id="266779"/>
    <lineage>
        <taxon>Bacteria</taxon>
        <taxon>Pseudomonadati</taxon>
        <taxon>Pseudomonadota</taxon>
        <taxon>Alphaproteobacteria</taxon>
        <taxon>Hyphomicrobiales</taxon>
        <taxon>Phyllobacteriaceae</taxon>
        <taxon>Chelativorans</taxon>
    </lineage>
</organism>
<reference key="1">
    <citation type="submission" date="2006-06" db="EMBL/GenBank/DDBJ databases">
        <title>Complete sequence of chromosome of Mesorhizobium sp. BNC1.</title>
        <authorList>
            <consortium name="US DOE Joint Genome Institute"/>
            <person name="Copeland A."/>
            <person name="Lucas S."/>
            <person name="Lapidus A."/>
            <person name="Barry K."/>
            <person name="Detter J.C."/>
            <person name="Glavina del Rio T."/>
            <person name="Hammon N."/>
            <person name="Israni S."/>
            <person name="Dalin E."/>
            <person name="Tice H."/>
            <person name="Pitluck S."/>
            <person name="Chertkov O."/>
            <person name="Brettin T."/>
            <person name="Bruce D."/>
            <person name="Han C."/>
            <person name="Tapia R."/>
            <person name="Gilna P."/>
            <person name="Schmutz J."/>
            <person name="Larimer F."/>
            <person name="Land M."/>
            <person name="Hauser L."/>
            <person name="Kyrpides N."/>
            <person name="Mikhailova N."/>
            <person name="Richardson P."/>
        </authorList>
    </citation>
    <scope>NUCLEOTIDE SEQUENCE [LARGE SCALE GENOMIC DNA]</scope>
    <source>
        <strain>BNC1</strain>
    </source>
</reference>
<gene>
    <name evidence="1" type="primary">mraY</name>
    <name type="ordered locus">Meso_2010</name>
</gene>
<protein>
    <recommendedName>
        <fullName evidence="1">Phospho-N-acetylmuramoyl-pentapeptide-transferase</fullName>
        <ecNumber evidence="1">2.7.8.13</ecNumber>
    </recommendedName>
    <alternativeName>
        <fullName evidence="1">UDP-MurNAc-pentapeptide phosphotransferase</fullName>
    </alternativeName>
</protein>
<keyword id="KW-0131">Cell cycle</keyword>
<keyword id="KW-0132">Cell division</keyword>
<keyword id="KW-0997">Cell inner membrane</keyword>
<keyword id="KW-1003">Cell membrane</keyword>
<keyword id="KW-0133">Cell shape</keyword>
<keyword id="KW-0961">Cell wall biogenesis/degradation</keyword>
<keyword id="KW-0460">Magnesium</keyword>
<keyword id="KW-0472">Membrane</keyword>
<keyword id="KW-0479">Metal-binding</keyword>
<keyword id="KW-0573">Peptidoglycan synthesis</keyword>
<keyword id="KW-0808">Transferase</keyword>
<keyword id="KW-0812">Transmembrane</keyword>
<keyword id="KW-1133">Transmembrane helix</keyword>
<name>MRAY_CHESB</name>
<feature type="chain" id="PRO_1000003007" description="Phospho-N-acetylmuramoyl-pentapeptide-transferase">
    <location>
        <begin position="1"/>
        <end position="360"/>
    </location>
</feature>
<feature type="transmembrane region" description="Helical" evidence="1">
    <location>
        <begin position="27"/>
        <end position="47"/>
    </location>
</feature>
<feature type="transmembrane region" description="Helical" evidence="1">
    <location>
        <begin position="70"/>
        <end position="90"/>
    </location>
</feature>
<feature type="transmembrane region" description="Helical" evidence="1">
    <location>
        <begin position="93"/>
        <end position="113"/>
    </location>
</feature>
<feature type="transmembrane region" description="Helical" evidence="1">
    <location>
        <begin position="134"/>
        <end position="154"/>
    </location>
</feature>
<feature type="transmembrane region" description="Helical" evidence="1">
    <location>
        <begin position="168"/>
        <end position="188"/>
    </location>
</feature>
<feature type="transmembrane region" description="Helical" evidence="1">
    <location>
        <begin position="205"/>
        <end position="225"/>
    </location>
</feature>
<feature type="transmembrane region" description="Helical" evidence="1">
    <location>
        <begin position="239"/>
        <end position="259"/>
    </location>
</feature>
<feature type="transmembrane region" description="Helical" evidence="1">
    <location>
        <begin position="262"/>
        <end position="282"/>
    </location>
</feature>
<feature type="transmembrane region" description="Helical" evidence="1">
    <location>
        <begin position="288"/>
        <end position="308"/>
    </location>
</feature>
<feature type="transmembrane region" description="Helical" evidence="1">
    <location>
        <begin position="337"/>
        <end position="357"/>
    </location>
</feature>
<evidence type="ECO:0000255" key="1">
    <source>
        <dbReference type="HAMAP-Rule" id="MF_00038"/>
    </source>
</evidence>
<proteinExistence type="inferred from homology"/>
<dbReference type="EC" id="2.7.8.13" evidence="1"/>
<dbReference type="EMBL" id="CP000390">
    <property type="protein sequence ID" value="ABG63403.1"/>
    <property type="molecule type" value="Genomic_DNA"/>
</dbReference>
<dbReference type="SMR" id="Q11GS2"/>
<dbReference type="STRING" id="266779.Meso_2010"/>
<dbReference type="KEGG" id="mes:Meso_2010"/>
<dbReference type="eggNOG" id="COG0472">
    <property type="taxonomic scope" value="Bacteria"/>
</dbReference>
<dbReference type="HOGENOM" id="CLU_023982_0_0_5"/>
<dbReference type="OrthoDB" id="9805475at2"/>
<dbReference type="UniPathway" id="UPA00219"/>
<dbReference type="GO" id="GO:0005886">
    <property type="term" value="C:plasma membrane"/>
    <property type="evidence" value="ECO:0007669"/>
    <property type="project" value="UniProtKB-SubCell"/>
</dbReference>
<dbReference type="GO" id="GO:0046872">
    <property type="term" value="F:metal ion binding"/>
    <property type="evidence" value="ECO:0007669"/>
    <property type="project" value="UniProtKB-KW"/>
</dbReference>
<dbReference type="GO" id="GO:0008963">
    <property type="term" value="F:phospho-N-acetylmuramoyl-pentapeptide-transferase activity"/>
    <property type="evidence" value="ECO:0007669"/>
    <property type="project" value="UniProtKB-UniRule"/>
</dbReference>
<dbReference type="GO" id="GO:0051992">
    <property type="term" value="F:UDP-N-acetylmuramoyl-L-alanyl-D-glutamyl-meso-2,6-diaminopimelyl-D-alanyl-D-alanine:undecaprenyl-phosphate transferase activity"/>
    <property type="evidence" value="ECO:0007669"/>
    <property type="project" value="RHEA"/>
</dbReference>
<dbReference type="GO" id="GO:0051301">
    <property type="term" value="P:cell division"/>
    <property type="evidence" value="ECO:0007669"/>
    <property type="project" value="UniProtKB-KW"/>
</dbReference>
<dbReference type="GO" id="GO:0071555">
    <property type="term" value="P:cell wall organization"/>
    <property type="evidence" value="ECO:0007669"/>
    <property type="project" value="UniProtKB-KW"/>
</dbReference>
<dbReference type="GO" id="GO:0009252">
    <property type="term" value="P:peptidoglycan biosynthetic process"/>
    <property type="evidence" value="ECO:0007669"/>
    <property type="project" value="UniProtKB-UniRule"/>
</dbReference>
<dbReference type="GO" id="GO:0008360">
    <property type="term" value="P:regulation of cell shape"/>
    <property type="evidence" value="ECO:0007669"/>
    <property type="project" value="UniProtKB-KW"/>
</dbReference>
<dbReference type="CDD" id="cd06852">
    <property type="entry name" value="GT_MraY"/>
    <property type="match status" value="1"/>
</dbReference>
<dbReference type="HAMAP" id="MF_00038">
    <property type="entry name" value="MraY"/>
    <property type="match status" value="1"/>
</dbReference>
<dbReference type="InterPro" id="IPR000715">
    <property type="entry name" value="Glycosyl_transferase_4"/>
</dbReference>
<dbReference type="InterPro" id="IPR003524">
    <property type="entry name" value="PNAcMuramoyl-5peptid_Trfase"/>
</dbReference>
<dbReference type="InterPro" id="IPR018480">
    <property type="entry name" value="PNAcMuramoyl-5peptid_Trfase_CS"/>
</dbReference>
<dbReference type="NCBIfam" id="TIGR00445">
    <property type="entry name" value="mraY"/>
    <property type="match status" value="1"/>
</dbReference>
<dbReference type="PANTHER" id="PTHR22926">
    <property type="entry name" value="PHOSPHO-N-ACETYLMURAMOYL-PENTAPEPTIDE-TRANSFERASE"/>
    <property type="match status" value="1"/>
</dbReference>
<dbReference type="PANTHER" id="PTHR22926:SF5">
    <property type="entry name" value="PHOSPHO-N-ACETYLMURAMOYL-PENTAPEPTIDE-TRANSFERASE HOMOLOG"/>
    <property type="match status" value="1"/>
</dbReference>
<dbReference type="Pfam" id="PF00953">
    <property type="entry name" value="Glycos_transf_4"/>
    <property type="match status" value="1"/>
</dbReference>
<dbReference type="Pfam" id="PF10555">
    <property type="entry name" value="MraY_sig1"/>
    <property type="match status" value="1"/>
</dbReference>
<dbReference type="PROSITE" id="PS01347">
    <property type="entry name" value="MRAY_1"/>
    <property type="match status" value="1"/>
</dbReference>
<dbReference type="PROSITE" id="PS01348">
    <property type="entry name" value="MRAY_2"/>
    <property type="match status" value="1"/>
</dbReference>